<feature type="chain" id="PRO_0000376245" description="NADH-quinone oxidoreductase subunit B">
    <location>
        <begin position="1"/>
        <end position="158"/>
    </location>
</feature>
<feature type="binding site" evidence="1">
    <location>
        <position position="37"/>
    </location>
    <ligand>
        <name>[4Fe-4S] cluster</name>
        <dbReference type="ChEBI" id="CHEBI:49883"/>
    </ligand>
</feature>
<feature type="binding site" evidence="1">
    <location>
        <position position="38"/>
    </location>
    <ligand>
        <name>[4Fe-4S] cluster</name>
        <dbReference type="ChEBI" id="CHEBI:49883"/>
    </ligand>
</feature>
<feature type="binding site" evidence="1">
    <location>
        <position position="102"/>
    </location>
    <ligand>
        <name>[4Fe-4S] cluster</name>
        <dbReference type="ChEBI" id="CHEBI:49883"/>
    </ligand>
</feature>
<feature type="binding site" evidence="1">
    <location>
        <position position="132"/>
    </location>
    <ligand>
        <name>[4Fe-4S] cluster</name>
        <dbReference type="ChEBI" id="CHEBI:49883"/>
    </ligand>
</feature>
<organism>
    <name type="scientific">Halorhodospira halophila (strain DSM 244 / SL1)</name>
    <name type="common">Ectothiorhodospira halophila (strain DSM 244 / SL1)</name>
    <dbReference type="NCBI Taxonomy" id="349124"/>
    <lineage>
        <taxon>Bacteria</taxon>
        <taxon>Pseudomonadati</taxon>
        <taxon>Pseudomonadota</taxon>
        <taxon>Gammaproteobacteria</taxon>
        <taxon>Chromatiales</taxon>
        <taxon>Ectothiorhodospiraceae</taxon>
        <taxon>Halorhodospira</taxon>
    </lineage>
</organism>
<keyword id="KW-0004">4Fe-4S</keyword>
<keyword id="KW-0997">Cell inner membrane</keyword>
<keyword id="KW-1003">Cell membrane</keyword>
<keyword id="KW-0408">Iron</keyword>
<keyword id="KW-0411">Iron-sulfur</keyword>
<keyword id="KW-0472">Membrane</keyword>
<keyword id="KW-0479">Metal-binding</keyword>
<keyword id="KW-0520">NAD</keyword>
<keyword id="KW-0874">Quinone</keyword>
<keyword id="KW-1185">Reference proteome</keyword>
<keyword id="KW-1278">Translocase</keyword>
<keyword id="KW-0813">Transport</keyword>
<keyword id="KW-0830">Ubiquinone</keyword>
<reference key="1">
    <citation type="submission" date="2006-12" db="EMBL/GenBank/DDBJ databases">
        <title>Complete sequence of Halorhodospira halophila SL1.</title>
        <authorList>
            <consortium name="US DOE Joint Genome Institute"/>
            <person name="Copeland A."/>
            <person name="Lucas S."/>
            <person name="Lapidus A."/>
            <person name="Barry K."/>
            <person name="Detter J.C."/>
            <person name="Glavina del Rio T."/>
            <person name="Hammon N."/>
            <person name="Israni S."/>
            <person name="Dalin E."/>
            <person name="Tice H."/>
            <person name="Pitluck S."/>
            <person name="Saunders E."/>
            <person name="Brettin T."/>
            <person name="Bruce D."/>
            <person name="Han C."/>
            <person name="Tapia R."/>
            <person name="Schmutz J."/>
            <person name="Larimer F."/>
            <person name="Land M."/>
            <person name="Hauser L."/>
            <person name="Kyrpides N."/>
            <person name="Mikhailova N."/>
            <person name="Hoff W."/>
            <person name="Richardson P."/>
        </authorList>
    </citation>
    <scope>NUCLEOTIDE SEQUENCE [LARGE SCALE GENOMIC DNA]</scope>
    <source>
        <strain>DSM 244 / SL1</strain>
    </source>
</reference>
<comment type="function">
    <text evidence="1">NDH-1 shuttles electrons from NADH, via FMN and iron-sulfur (Fe-S) centers, to quinones in the respiratory chain. The immediate electron acceptor for the enzyme in this species is believed to be ubiquinone. Couples the redox reaction to proton translocation (for every two electrons transferred, four hydrogen ions are translocated across the cytoplasmic membrane), and thus conserves the redox energy in a proton gradient.</text>
</comment>
<comment type="catalytic activity">
    <reaction evidence="1">
        <text>a quinone + NADH + 5 H(+)(in) = a quinol + NAD(+) + 4 H(+)(out)</text>
        <dbReference type="Rhea" id="RHEA:57888"/>
        <dbReference type="ChEBI" id="CHEBI:15378"/>
        <dbReference type="ChEBI" id="CHEBI:24646"/>
        <dbReference type="ChEBI" id="CHEBI:57540"/>
        <dbReference type="ChEBI" id="CHEBI:57945"/>
        <dbReference type="ChEBI" id="CHEBI:132124"/>
    </reaction>
</comment>
<comment type="cofactor">
    <cofactor evidence="1">
        <name>[4Fe-4S] cluster</name>
        <dbReference type="ChEBI" id="CHEBI:49883"/>
    </cofactor>
    <text evidence="1">Binds 1 [4Fe-4S] cluster.</text>
</comment>
<comment type="subunit">
    <text evidence="1">NDH-1 is composed of 14 different subunits. Subunits NuoB, C, D, E, F, and G constitute the peripheral sector of the complex.</text>
</comment>
<comment type="subcellular location">
    <subcellularLocation>
        <location evidence="1">Cell inner membrane</location>
        <topology evidence="1">Peripheral membrane protein</topology>
        <orientation evidence="1">Cytoplasmic side</orientation>
    </subcellularLocation>
</comment>
<comment type="similarity">
    <text evidence="1">Belongs to the complex I 20 kDa subunit family.</text>
</comment>
<evidence type="ECO:0000255" key="1">
    <source>
        <dbReference type="HAMAP-Rule" id="MF_01356"/>
    </source>
</evidence>
<proteinExistence type="inferred from homology"/>
<dbReference type="EC" id="7.1.1.-" evidence="1"/>
<dbReference type="EMBL" id="CP000544">
    <property type="protein sequence ID" value="ABM62528.1"/>
    <property type="molecule type" value="Genomic_DNA"/>
</dbReference>
<dbReference type="RefSeq" id="WP_011814550.1">
    <property type="nucleotide sequence ID" value="NC_008789.1"/>
</dbReference>
<dbReference type="SMR" id="A1WXW6"/>
<dbReference type="STRING" id="349124.Hhal_1764"/>
<dbReference type="KEGG" id="hha:Hhal_1764"/>
<dbReference type="eggNOG" id="COG0377">
    <property type="taxonomic scope" value="Bacteria"/>
</dbReference>
<dbReference type="HOGENOM" id="CLU_055737_7_3_6"/>
<dbReference type="OrthoDB" id="9786737at2"/>
<dbReference type="Proteomes" id="UP000000647">
    <property type="component" value="Chromosome"/>
</dbReference>
<dbReference type="GO" id="GO:0005886">
    <property type="term" value="C:plasma membrane"/>
    <property type="evidence" value="ECO:0007669"/>
    <property type="project" value="UniProtKB-SubCell"/>
</dbReference>
<dbReference type="GO" id="GO:0045271">
    <property type="term" value="C:respiratory chain complex I"/>
    <property type="evidence" value="ECO:0007669"/>
    <property type="project" value="TreeGrafter"/>
</dbReference>
<dbReference type="GO" id="GO:0051539">
    <property type="term" value="F:4 iron, 4 sulfur cluster binding"/>
    <property type="evidence" value="ECO:0007669"/>
    <property type="project" value="UniProtKB-KW"/>
</dbReference>
<dbReference type="GO" id="GO:0005506">
    <property type="term" value="F:iron ion binding"/>
    <property type="evidence" value="ECO:0007669"/>
    <property type="project" value="UniProtKB-UniRule"/>
</dbReference>
<dbReference type="GO" id="GO:0008137">
    <property type="term" value="F:NADH dehydrogenase (ubiquinone) activity"/>
    <property type="evidence" value="ECO:0007669"/>
    <property type="project" value="InterPro"/>
</dbReference>
<dbReference type="GO" id="GO:0050136">
    <property type="term" value="F:NADH:ubiquinone reductase (non-electrogenic) activity"/>
    <property type="evidence" value="ECO:0007669"/>
    <property type="project" value="UniProtKB-UniRule"/>
</dbReference>
<dbReference type="GO" id="GO:0048038">
    <property type="term" value="F:quinone binding"/>
    <property type="evidence" value="ECO:0007669"/>
    <property type="project" value="UniProtKB-KW"/>
</dbReference>
<dbReference type="GO" id="GO:0009060">
    <property type="term" value="P:aerobic respiration"/>
    <property type="evidence" value="ECO:0007669"/>
    <property type="project" value="TreeGrafter"/>
</dbReference>
<dbReference type="GO" id="GO:0015990">
    <property type="term" value="P:electron transport coupled proton transport"/>
    <property type="evidence" value="ECO:0007669"/>
    <property type="project" value="TreeGrafter"/>
</dbReference>
<dbReference type="FunFam" id="3.40.50.12280:FF:000001">
    <property type="entry name" value="NADH-quinone oxidoreductase subunit B 2"/>
    <property type="match status" value="1"/>
</dbReference>
<dbReference type="Gene3D" id="3.40.50.12280">
    <property type="match status" value="1"/>
</dbReference>
<dbReference type="HAMAP" id="MF_01356">
    <property type="entry name" value="NDH1_NuoB"/>
    <property type="match status" value="1"/>
</dbReference>
<dbReference type="InterPro" id="IPR006137">
    <property type="entry name" value="NADH_UbQ_OxRdtase-like_20kDa"/>
</dbReference>
<dbReference type="InterPro" id="IPR006138">
    <property type="entry name" value="NADH_UQ_OxRdtase_20Kd_su"/>
</dbReference>
<dbReference type="NCBIfam" id="TIGR01957">
    <property type="entry name" value="nuoB_fam"/>
    <property type="match status" value="1"/>
</dbReference>
<dbReference type="NCBIfam" id="NF005012">
    <property type="entry name" value="PRK06411.1"/>
    <property type="match status" value="1"/>
</dbReference>
<dbReference type="PANTHER" id="PTHR11995">
    <property type="entry name" value="NADH DEHYDROGENASE"/>
    <property type="match status" value="1"/>
</dbReference>
<dbReference type="PANTHER" id="PTHR11995:SF14">
    <property type="entry name" value="NADH DEHYDROGENASE [UBIQUINONE] IRON-SULFUR PROTEIN 7, MITOCHONDRIAL"/>
    <property type="match status" value="1"/>
</dbReference>
<dbReference type="Pfam" id="PF01058">
    <property type="entry name" value="Oxidored_q6"/>
    <property type="match status" value="1"/>
</dbReference>
<dbReference type="SUPFAM" id="SSF56770">
    <property type="entry name" value="HydA/Nqo6-like"/>
    <property type="match status" value="1"/>
</dbReference>
<dbReference type="PROSITE" id="PS01150">
    <property type="entry name" value="COMPLEX1_20K"/>
    <property type="match status" value="1"/>
</dbReference>
<accession>A1WXW6</accession>
<gene>
    <name evidence="1" type="primary">nuoB</name>
    <name type="ordered locus">Hhal_1764</name>
</gene>
<sequence>MGVEGILERGYVTTSADKLINWARTGSLWPMTFGLACCAVEMMHTAAGRYDMDRNGLIFRPSPRQSDVMIVAGTLCNKMAPALRKVYDQMPEPKWVISMGSCANGGGYYHYSYSVTRGCDRIVPVDIYVPGCPPTAEALYYGILQLQNKIRRTNTIAR</sequence>
<name>NUOB_HALHL</name>
<protein>
    <recommendedName>
        <fullName evidence="1">NADH-quinone oxidoreductase subunit B</fullName>
        <ecNumber evidence="1">7.1.1.-</ecNumber>
    </recommendedName>
    <alternativeName>
        <fullName evidence="1">NADH dehydrogenase I subunit B</fullName>
    </alternativeName>
    <alternativeName>
        <fullName evidence="1">NDH-1 subunit B</fullName>
    </alternativeName>
</protein>